<comment type="function">
    <text evidence="1">Regulates the transcription of several operons and genes involved in the biogenesis of Fe-S clusters and Fe-S-containing proteins.</text>
</comment>
<comment type="cofactor">
    <cofactor evidence="1">
        <name>[2Fe-2S] cluster</name>
        <dbReference type="ChEBI" id="CHEBI:190135"/>
    </cofactor>
    <text evidence="1">Binds 1 [2Fe-2S] cluster.</text>
</comment>
<proteinExistence type="inferred from homology"/>
<accession>B1IWD0</accession>
<sequence length="162" mass="17349">MRLTSKGRYAVTAMLDVALNSEAGPVPLADISERQGISLSYLEQLFSRLRKNGLVSSVRGPGGGYLLGKDASSIAVGEVISAVDESVDATRCQGKGGCQGGDKCLTHALWRDLSDRLTGFLNNITLGELVNNQEVLDVSGRQHTHDAPRTRIQDAIDVKLRA</sequence>
<dbReference type="EMBL" id="CP000946">
    <property type="protein sequence ID" value="ACA76813.1"/>
    <property type="molecule type" value="Genomic_DNA"/>
</dbReference>
<dbReference type="RefSeq" id="WP_001241356.1">
    <property type="nucleotide sequence ID" value="NZ_MTFT01000002.1"/>
</dbReference>
<dbReference type="SMR" id="B1IWD0"/>
<dbReference type="GeneID" id="93774605"/>
<dbReference type="KEGG" id="ecl:EcolC_1146"/>
<dbReference type="HOGENOM" id="CLU_107144_0_0_6"/>
<dbReference type="GO" id="GO:0005829">
    <property type="term" value="C:cytosol"/>
    <property type="evidence" value="ECO:0007669"/>
    <property type="project" value="TreeGrafter"/>
</dbReference>
<dbReference type="GO" id="GO:0051537">
    <property type="term" value="F:2 iron, 2 sulfur cluster binding"/>
    <property type="evidence" value="ECO:0007669"/>
    <property type="project" value="UniProtKB-KW"/>
</dbReference>
<dbReference type="GO" id="GO:0003700">
    <property type="term" value="F:DNA-binding transcription factor activity"/>
    <property type="evidence" value="ECO:0007669"/>
    <property type="project" value="UniProtKB-UniRule"/>
</dbReference>
<dbReference type="GO" id="GO:0003690">
    <property type="term" value="F:double-stranded DNA binding"/>
    <property type="evidence" value="ECO:0007669"/>
    <property type="project" value="UniProtKB-UniRule"/>
</dbReference>
<dbReference type="GO" id="GO:0005506">
    <property type="term" value="F:iron ion binding"/>
    <property type="evidence" value="ECO:0007669"/>
    <property type="project" value="UniProtKB-UniRule"/>
</dbReference>
<dbReference type="FunFam" id="1.10.10.10:FF:000026">
    <property type="entry name" value="HTH-type transcriptional regulator IscR"/>
    <property type="match status" value="1"/>
</dbReference>
<dbReference type="Gene3D" id="1.10.10.10">
    <property type="entry name" value="Winged helix-like DNA-binding domain superfamily/Winged helix DNA-binding domain"/>
    <property type="match status" value="1"/>
</dbReference>
<dbReference type="HAMAP" id="MF_01176">
    <property type="entry name" value="HTH_type_IscR"/>
    <property type="match status" value="1"/>
</dbReference>
<dbReference type="InterPro" id="IPR010242">
    <property type="entry name" value="TF_HTH_IscR"/>
</dbReference>
<dbReference type="InterPro" id="IPR030489">
    <property type="entry name" value="TR_Rrf2-type_CS"/>
</dbReference>
<dbReference type="InterPro" id="IPR000944">
    <property type="entry name" value="Tscrpt_reg_Rrf2"/>
</dbReference>
<dbReference type="InterPro" id="IPR036388">
    <property type="entry name" value="WH-like_DNA-bd_sf"/>
</dbReference>
<dbReference type="InterPro" id="IPR036390">
    <property type="entry name" value="WH_DNA-bd_sf"/>
</dbReference>
<dbReference type="NCBIfam" id="TIGR02010">
    <property type="entry name" value="IscR"/>
    <property type="match status" value="1"/>
</dbReference>
<dbReference type="NCBIfam" id="NF008110">
    <property type="entry name" value="PRK10857.1"/>
    <property type="match status" value="1"/>
</dbReference>
<dbReference type="NCBIfam" id="TIGR00738">
    <property type="entry name" value="rrf2_super"/>
    <property type="match status" value="1"/>
</dbReference>
<dbReference type="PANTHER" id="PTHR33221:SF5">
    <property type="entry name" value="HTH-TYPE TRANSCRIPTIONAL REGULATOR ISCR"/>
    <property type="match status" value="1"/>
</dbReference>
<dbReference type="PANTHER" id="PTHR33221">
    <property type="entry name" value="WINGED HELIX-TURN-HELIX TRANSCRIPTIONAL REGULATOR, RRF2 FAMILY"/>
    <property type="match status" value="1"/>
</dbReference>
<dbReference type="Pfam" id="PF02082">
    <property type="entry name" value="Rrf2"/>
    <property type="match status" value="1"/>
</dbReference>
<dbReference type="SUPFAM" id="SSF46785">
    <property type="entry name" value="Winged helix' DNA-binding domain"/>
    <property type="match status" value="1"/>
</dbReference>
<dbReference type="PROSITE" id="PS01332">
    <property type="entry name" value="HTH_RRF2_1"/>
    <property type="match status" value="1"/>
</dbReference>
<dbReference type="PROSITE" id="PS51197">
    <property type="entry name" value="HTH_RRF2_2"/>
    <property type="match status" value="1"/>
</dbReference>
<feature type="chain" id="PRO_1000085418" description="HTH-type transcriptional regulator IscR">
    <location>
        <begin position="1"/>
        <end position="162"/>
    </location>
</feature>
<feature type="domain" description="HTH rrf2-type" evidence="1">
    <location>
        <begin position="2"/>
        <end position="131"/>
    </location>
</feature>
<feature type="DNA-binding region" description="H-T-H motif" evidence="1">
    <location>
        <begin position="28"/>
        <end position="51"/>
    </location>
</feature>
<feature type="binding site" evidence="1">
    <location>
        <position position="92"/>
    </location>
    <ligand>
        <name>[2Fe-2S] cluster</name>
        <dbReference type="ChEBI" id="CHEBI:190135"/>
    </ligand>
</feature>
<feature type="binding site" evidence="1">
    <location>
        <position position="98"/>
    </location>
    <ligand>
        <name>[2Fe-2S] cluster</name>
        <dbReference type="ChEBI" id="CHEBI:190135"/>
    </ligand>
</feature>
<feature type="binding site" evidence="1">
    <location>
        <position position="104"/>
    </location>
    <ligand>
        <name>[2Fe-2S] cluster</name>
        <dbReference type="ChEBI" id="CHEBI:190135"/>
    </ligand>
</feature>
<evidence type="ECO:0000255" key="1">
    <source>
        <dbReference type="HAMAP-Rule" id="MF_01176"/>
    </source>
</evidence>
<keyword id="KW-0001">2Fe-2S</keyword>
<keyword id="KW-0010">Activator</keyword>
<keyword id="KW-0238">DNA-binding</keyword>
<keyword id="KW-0408">Iron</keyword>
<keyword id="KW-0411">Iron-sulfur</keyword>
<keyword id="KW-0479">Metal-binding</keyword>
<keyword id="KW-0678">Repressor</keyword>
<keyword id="KW-0804">Transcription</keyword>
<keyword id="KW-0805">Transcription regulation</keyword>
<reference key="1">
    <citation type="submission" date="2008-02" db="EMBL/GenBank/DDBJ databases">
        <title>Complete sequence of Escherichia coli C str. ATCC 8739.</title>
        <authorList>
            <person name="Copeland A."/>
            <person name="Lucas S."/>
            <person name="Lapidus A."/>
            <person name="Glavina del Rio T."/>
            <person name="Dalin E."/>
            <person name="Tice H."/>
            <person name="Bruce D."/>
            <person name="Goodwin L."/>
            <person name="Pitluck S."/>
            <person name="Kiss H."/>
            <person name="Brettin T."/>
            <person name="Detter J.C."/>
            <person name="Han C."/>
            <person name="Kuske C.R."/>
            <person name="Schmutz J."/>
            <person name="Larimer F."/>
            <person name="Land M."/>
            <person name="Hauser L."/>
            <person name="Kyrpides N."/>
            <person name="Mikhailova N."/>
            <person name="Ingram L."/>
            <person name="Richardson P."/>
        </authorList>
    </citation>
    <scope>NUCLEOTIDE SEQUENCE [LARGE SCALE GENOMIC DNA]</scope>
    <source>
        <strain>ATCC 8739 / DSM 1576 / NBRC 3972 / NCIMB 8545 / WDCM 00012 / Crooks</strain>
    </source>
</reference>
<gene>
    <name evidence="1" type="primary">iscR</name>
    <name type="ordered locus">EcolC_1146</name>
</gene>
<name>ISCR_ECOLC</name>
<organism>
    <name type="scientific">Escherichia coli (strain ATCC 8739 / DSM 1576 / NBRC 3972 / NCIMB 8545 / WDCM 00012 / Crooks)</name>
    <dbReference type="NCBI Taxonomy" id="481805"/>
    <lineage>
        <taxon>Bacteria</taxon>
        <taxon>Pseudomonadati</taxon>
        <taxon>Pseudomonadota</taxon>
        <taxon>Gammaproteobacteria</taxon>
        <taxon>Enterobacterales</taxon>
        <taxon>Enterobacteriaceae</taxon>
        <taxon>Escherichia</taxon>
    </lineage>
</organism>
<protein>
    <recommendedName>
        <fullName evidence="1">HTH-type transcriptional regulator IscR</fullName>
    </recommendedName>
</protein>